<feature type="transit peptide" description="Mitochondrion" evidence="1">
    <location>
        <begin position="1"/>
        <end position="16"/>
    </location>
</feature>
<feature type="chain" id="PRO_0000030523" description="Large ribosomal subunit protein bL34m">
    <location>
        <begin position="17"/>
        <end position="105"/>
    </location>
</feature>
<comment type="function">
    <text evidence="8 9">Component of the mitochondrial ribosome (mitoribosome), a dedicated translation machinery responsible for the synthesis of mitochondrial genome-encoded proteins, including at least some of the essential transmembrane subunits of the mitochondrial respiratory chain. The mitoribosomes are attached to the mitochondrial inner membrane and translation products are cotranslationally integrated into the membrane.</text>
</comment>
<comment type="subunit">
    <text evidence="4">Component of the mitochondrial large ribosomal subunit (mt-LSU). Mature yeast 74S mitochondrial ribosomes consist of a small (37S) and a large (54S) subunit. The 37S small subunit contains a 15S ribosomal RNA (15S mt-rRNA) and 34 different proteins. The 54S large subunit contains a 21S rRNA (21S mt-rRNA) and 46 different proteins.</text>
</comment>
<comment type="subcellular location">
    <subcellularLocation>
        <location evidence="2">Mitochondrion</location>
    </subcellularLocation>
    <text evidence="5">Mitoribosomes are tethered to the mitochondrial inner membrane and spatially aligned with the membrane insertion machinery through two distinct membrane contact sites, formed by the 21S rRNA expansion segment 96-ES1 and the inner membrane protein MBA1.</text>
</comment>
<comment type="miscellaneous">
    <text evidence="3">Present with 200 molecules/cell in log phase SD medium.</text>
</comment>
<comment type="similarity">
    <text evidence="7">Belongs to the bacterial ribosomal protein bL34 family.</text>
</comment>
<reference key="1">
    <citation type="journal article" date="1997" name="Nature">
        <title>The nucleotide sequence of Saccharomyces cerevisiae chromosome IV.</title>
        <authorList>
            <person name="Jacq C."/>
            <person name="Alt-Moerbe J."/>
            <person name="Andre B."/>
            <person name="Arnold W."/>
            <person name="Bahr A."/>
            <person name="Ballesta J.P.G."/>
            <person name="Bargues M."/>
            <person name="Baron L."/>
            <person name="Becker A."/>
            <person name="Biteau N."/>
            <person name="Bloecker H."/>
            <person name="Blugeon C."/>
            <person name="Boskovic J."/>
            <person name="Brandt P."/>
            <person name="Brueckner M."/>
            <person name="Buitrago M.J."/>
            <person name="Coster F."/>
            <person name="Delaveau T."/>
            <person name="del Rey F."/>
            <person name="Dujon B."/>
            <person name="Eide L.G."/>
            <person name="Garcia-Cantalejo J.M."/>
            <person name="Goffeau A."/>
            <person name="Gomez-Peris A."/>
            <person name="Granotier C."/>
            <person name="Hanemann V."/>
            <person name="Hankeln T."/>
            <person name="Hoheisel J.D."/>
            <person name="Jaeger W."/>
            <person name="Jimenez A."/>
            <person name="Jonniaux J.-L."/>
            <person name="Kraemer C."/>
            <person name="Kuester H."/>
            <person name="Laamanen P."/>
            <person name="Legros Y."/>
            <person name="Louis E.J."/>
            <person name="Moeller-Rieker S."/>
            <person name="Monnet A."/>
            <person name="Moro M."/>
            <person name="Mueller-Auer S."/>
            <person name="Nussbaumer B."/>
            <person name="Paricio N."/>
            <person name="Paulin L."/>
            <person name="Perea J."/>
            <person name="Perez-Alonso M."/>
            <person name="Perez-Ortin J.E."/>
            <person name="Pohl T.M."/>
            <person name="Prydz H."/>
            <person name="Purnelle B."/>
            <person name="Rasmussen S.W."/>
            <person name="Remacha M.A."/>
            <person name="Revuelta J.L."/>
            <person name="Rieger M."/>
            <person name="Salom D."/>
            <person name="Saluz H.P."/>
            <person name="Saiz J.E."/>
            <person name="Saren A.-M."/>
            <person name="Schaefer M."/>
            <person name="Scharfe M."/>
            <person name="Schmidt E.R."/>
            <person name="Schneider C."/>
            <person name="Scholler P."/>
            <person name="Schwarz S."/>
            <person name="Soler-Mira A."/>
            <person name="Urrestarazu L.A."/>
            <person name="Verhasselt P."/>
            <person name="Vissers S."/>
            <person name="Voet M."/>
            <person name="Volckaert G."/>
            <person name="Wagner G."/>
            <person name="Wambutt R."/>
            <person name="Wedler E."/>
            <person name="Wedler H."/>
            <person name="Woelfl S."/>
            <person name="Harris D.E."/>
            <person name="Bowman S."/>
            <person name="Brown D."/>
            <person name="Churcher C.M."/>
            <person name="Connor R."/>
            <person name="Dedman K."/>
            <person name="Gentles S."/>
            <person name="Hamlin N."/>
            <person name="Hunt S."/>
            <person name="Jones L."/>
            <person name="McDonald S."/>
            <person name="Murphy L.D."/>
            <person name="Niblett D."/>
            <person name="Odell C."/>
            <person name="Oliver K."/>
            <person name="Rajandream M.A."/>
            <person name="Richards C."/>
            <person name="Shore L."/>
            <person name="Walsh S.V."/>
            <person name="Barrell B.G."/>
            <person name="Dietrich F.S."/>
            <person name="Mulligan J.T."/>
            <person name="Allen E."/>
            <person name="Araujo R."/>
            <person name="Aviles E."/>
            <person name="Berno A."/>
            <person name="Carpenter J."/>
            <person name="Chen E."/>
            <person name="Cherry J.M."/>
            <person name="Chung E."/>
            <person name="Duncan M."/>
            <person name="Hunicke-Smith S."/>
            <person name="Hyman R.W."/>
            <person name="Komp C."/>
            <person name="Lashkari D."/>
            <person name="Lew H."/>
            <person name="Lin D."/>
            <person name="Mosedale D."/>
            <person name="Nakahara K."/>
            <person name="Namath A."/>
            <person name="Oefner P."/>
            <person name="Oh C."/>
            <person name="Petel F.X."/>
            <person name="Roberts D."/>
            <person name="Schramm S."/>
            <person name="Schroeder M."/>
            <person name="Shogren T."/>
            <person name="Shroff N."/>
            <person name="Winant A."/>
            <person name="Yelton M.A."/>
            <person name="Botstein D."/>
            <person name="Davis R.W."/>
            <person name="Johnston M."/>
            <person name="Andrews S."/>
            <person name="Brinkman R."/>
            <person name="Cooper J."/>
            <person name="Ding H."/>
            <person name="Du Z."/>
            <person name="Favello A."/>
            <person name="Fulton L."/>
            <person name="Gattung S."/>
            <person name="Greco T."/>
            <person name="Hallsworth K."/>
            <person name="Hawkins J."/>
            <person name="Hillier L.W."/>
            <person name="Jier M."/>
            <person name="Johnson D."/>
            <person name="Johnston L."/>
            <person name="Kirsten J."/>
            <person name="Kucaba T."/>
            <person name="Langston Y."/>
            <person name="Latreille P."/>
            <person name="Le T."/>
            <person name="Mardis E."/>
            <person name="Menezes S."/>
            <person name="Miller N."/>
            <person name="Nhan M."/>
            <person name="Pauley A."/>
            <person name="Peluso D."/>
            <person name="Rifkin L."/>
            <person name="Riles L."/>
            <person name="Taich A."/>
            <person name="Trevaskis E."/>
            <person name="Vignati D."/>
            <person name="Wilcox L."/>
            <person name="Wohldman P."/>
            <person name="Vaudin M."/>
            <person name="Wilson R."/>
            <person name="Waterston R."/>
            <person name="Albermann K."/>
            <person name="Hani J."/>
            <person name="Heumann K."/>
            <person name="Kleine K."/>
            <person name="Mewes H.-W."/>
            <person name="Zollner A."/>
            <person name="Zaccaria P."/>
        </authorList>
    </citation>
    <scope>NUCLEOTIDE SEQUENCE [LARGE SCALE GENOMIC DNA]</scope>
    <source>
        <strain>ATCC 204508 / S288c</strain>
    </source>
</reference>
<reference key="2">
    <citation type="journal article" date="2014" name="G3 (Bethesda)">
        <title>The reference genome sequence of Saccharomyces cerevisiae: Then and now.</title>
        <authorList>
            <person name="Engel S.R."/>
            <person name="Dietrich F.S."/>
            <person name="Fisk D.G."/>
            <person name="Binkley G."/>
            <person name="Balakrishnan R."/>
            <person name="Costanzo M.C."/>
            <person name="Dwight S.S."/>
            <person name="Hitz B.C."/>
            <person name="Karra K."/>
            <person name="Nash R.S."/>
            <person name="Weng S."/>
            <person name="Wong E.D."/>
            <person name="Lloyd P."/>
            <person name="Skrzypek M.S."/>
            <person name="Miyasato S.R."/>
            <person name="Simison M."/>
            <person name="Cherry J.M."/>
        </authorList>
    </citation>
    <scope>GENOME REANNOTATION</scope>
    <source>
        <strain>ATCC 204508 / S288c</strain>
    </source>
</reference>
<reference key="3">
    <citation type="journal article" date="2007" name="Genome Res.">
        <title>Approaching a complete repository of sequence-verified protein-encoding clones for Saccharomyces cerevisiae.</title>
        <authorList>
            <person name="Hu Y."/>
            <person name="Rolfs A."/>
            <person name="Bhullar B."/>
            <person name="Murthy T.V.S."/>
            <person name="Zhu C."/>
            <person name="Berger M.F."/>
            <person name="Camargo A.A."/>
            <person name="Kelley F."/>
            <person name="McCarron S."/>
            <person name="Jepson D."/>
            <person name="Richardson A."/>
            <person name="Raphael J."/>
            <person name="Moreira D."/>
            <person name="Taycher E."/>
            <person name="Zuo D."/>
            <person name="Mohr S."/>
            <person name="Kane M.F."/>
            <person name="Williamson J."/>
            <person name="Simpson A.J.G."/>
            <person name="Bulyk M.L."/>
            <person name="Harlow E."/>
            <person name="Marsischky G."/>
            <person name="Kolodner R.D."/>
            <person name="LaBaer J."/>
        </authorList>
    </citation>
    <scope>NUCLEOTIDE SEQUENCE [GENOMIC DNA]</scope>
    <source>
        <strain>ATCC 204508 / S288c</strain>
    </source>
</reference>
<reference key="4">
    <citation type="journal article" date="2003" name="Nature">
        <title>Global analysis of protein localization in budding yeast.</title>
        <authorList>
            <person name="Huh W.-K."/>
            <person name="Falvo J.V."/>
            <person name="Gerke L.C."/>
            <person name="Carroll A.S."/>
            <person name="Howson R.W."/>
            <person name="Weissman J.S."/>
            <person name="O'Shea E.K."/>
        </authorList>
    </citation>
    <scope>SUBCELLULAR LOCATION [LARGE SCALE ANALYSIS]</scope>
</reference>
<reference key="5">
    <citation type="journal article" date="2003" name="Nature">
        <title>Global analysis of protein expression in yeast.</title>
        <authorList>
            <person name="Ghaemmaghami S."/>
            <person name="Huh W.-K."/>
            <person name="Bower K."/>
            <person name="Howson R.W."/>
            <person name="Belle A."/>
            <person name="Dephoure N."/>
            <person name="O'Shea E.K."/>
            <person name="Weissman J.S."/>
        </authorList>
    </citation>
    <scope>LEVEL OF PROTEIN EXPRESSION [LARGE SCALE ANALYSIS]</scope>
</reference>
<reference key="6">
    <citation type="journal article" date="2015" name="Nat. Commun.">
        <title>Organization of the mitochondrial translation machinery studied in situ by cryoelectron tomography.</title>
        <authorList>
            <person name="Pfeffer S."/>
            <person name="Woellhaf M.W."/>
            <person name="Herrmann J.M."/>
            <person name="Forster F."/>
        </authorList>
    </citation>
    <scope>SUBCELLULAR LOCATION</scope>
</reference>
<reference key="7">
    <citation type="journal article" date="2014" name="Science">
        <title>Structure of the yeast mitochondrial large ribosomal subunit.</title>
        <authorList>
            <person name="Amunts A."/>
            <person name="Brown A."/>
            <person name="Bai X.C."/>
            <person name="Llacer J.L."/>
            <person name="Hussain T."/>
            <person name="Emsley P."/>
            <person name="Long F."/>
            <person name="Murshudov G."/>
            <person name="Scheres S.H."/>
            <person name="Ramakrishnan V."/>
        </authorList>
    </citation>
    <scope>STRUCTURE BY ELECTRON MICROSCOPY (3.20 ANGSTROMS)</scope>
    <scope>SUBUNIT</scope>
</reference>
<proteinExistence type="evidence at protein level"/>
<evidence type="ECO:0000255" key="1"/>
<evidence type="ECO:0000269" key="2">
    <source>
    </source>
</evidence>
<evidence type="ECO:0000269" key="3">
    <source>
    </source>
</evidence>
<evidence type="ECO:0000269" key="4">
    <source>
    </source>
</evidence>
<evidence type="ECO:0000269" key="5">
    <source>
    </source>
</evidence>
<evidence type="ECO:0000303" key="6">
    <source>
    </source>
</evidence>
<evidence type="ECO:0000305" key="7"/>
<evidence type="ECO:0000305" key="8">
    <source>
    </source>
</evidence>
<evidence type="ECO:0000305" key="9">
    <source>
    </source>
</evidence>
<sequence length="105" mass="12030">MPLFARLCQPQSRRMFSSISSFSALSVLRPQTGMLLNSSPLKTPSFTPLGFGLIGQRRWKSRGNTYQPSTLKRKRTFGFLARAKSKQGSKILKRRKLKGRWFLSH</sequence>
<name>RM34_YEAST</name>
<organism>
    <name type="scientific">Saccharomyces cerevisiae (strain ATCC 204508 / S288c)</name>
    <name type="common">Baker's yeast</name>
    <dbReference type="NCBI Taxonomy" id="559292"/>
    <lineage>
        <taxon>Eukaryota</taxon>
        <taxon>Fungi</taxon>
        <taxon>Dikarya</taxon>
        <taxon>Ascomycota</taxon>
        <taxon>Saccharomycotina</taxon>
        <taxon>Saccharomycetes</taxon>
        <taxon>Saccharomycetales</taxon>
        <taxon>Saccharomycetaceae</taxon>
        <taxon>Saccharomyces</taxon>
    </lineage>
</organism>
<keyword id="KW-0002">3D-structure</keyword>
<keyword id="KW-0496">Mitochondrion</keyword>
<keyword id="KW-1185">Reference proteome</keyword>
<keyword id="KW-0687">Ribonucleoprotein</keyword>
<keyword id="KW-0689">Ribosomal protein</keyword>
<keyword id="KW-0809">Transit peptide</keyword>
<gene>
    <name type="ordered locus">YDR115W</name>
    <name type="ORF">YD9727.10</name>
</gene>
<accession>Q04598</accession>
<accession>D6VSA0</accession>
<dbReference type="EMBL" id="Z48758">
    <property type="protein sequence ID" value="CAA88668.1"/>
    <property type="molecule type" value="Genomic_DNA"/>
</dbReference>
<dbReference type="EMBL" id="AY557661">
    <property type="protein sequence ID" value="AAS55987.1"/>
    <property type="molecule type" value="Genomic_DNA"/>
</dbReference>
<dbReference type="EMBL" id="BK006938">
    <property type="protein sequence ID" value="DAA11960.1"/>
    <property type="molecule type" value="Genomic_DNA"/>
</dbReference>
<dbReference type="PIR" id="S52680">
    <property type="entry name" value="S52680"/>
</dbReference>
<dbReference type="PDB" id="3J6B">
    <property type="method" value="EM"/>
    <property type="resolution" value="3.20 A"/>
    <property type="chains" value="Y=1-105"/>
</dbReference>
<dbReference type="PDB" id="5MRC">
    <property type="method" value="EM"/>
    <property type="resolution" value="3.25 A"/>
    <property type="chains" value="Y=60-105"/>
</dbReference>
<dbReference type="PDB" id="5MRE">
    <property type="method" value="EM"/>
    <property type="resolution" value="3.75 A"/>
    <property type="chains" value="Y=60-105"/>
</dbReference>
<dbReference type="PDB" id="5MRF">
    <property type="method" value="EM"/>
    <property type="resolution" value="4.97 A"/>
    <property type="chains" value="Y=60-105"/>
</dbReference>
<dbReference type="PDBsum" id="3J6B"/>
<dbReference type="PDBsum" id="5MRC"/>
<dbReference type="PDBsum" id="5MRE"/>
<dbReference type="PDBsum" id="5MRF"/>
<dbReference type="EMDB" id="EMD-3551"/>
<dbReference type="EMDB" id="EMD-3552"/>
<dbReference type="EMDB" id="EMD-3553"/>
<dbReference type="SMR" id="Q04598"/>
<dbReference type="BioGRID" id="32171">
    <property type="interactions" value="206"/>
</dbReference>
<dbReference type="ComplexPortal" id="CPX-1602">
    <property type="entry name" value="54S mitochondrial large ribosomal subunit"/>
</dbReference>
<dbReference type="DIP" id="DIP-1824N"/>
<dbReference type="FunCoup" id="Q04598">
    <property type="interactions" value="255"/>
</dbReference>
<dbReference type="IntAct" id="Q04598">
    <property type="interactions" value="64"/>
</dbReference>
<dbReference type="MINT" id="Q04598"/>
<dbReference type="STRING" id="4932.YDR115W"/>
<dbReference type="PaxDb" id="4932-YDR115W"/>
<dbReference type="PeptideAtlas" id="Q04598"/>
<dbReference type="EnsemblFungi" id="YDR115W_mRNA">
    <property type="protein sequence ID" value="YDR115W"/>
    <property type="gene ID" value="YDR115W"/>
</dbReference>
<dbReference type="KEGG" id="sce:YDR115W"/>
<dbReference type="AGR" id="SGD:S000002522"/>
<dbReference type="SGD" id="S000002522">
    <property type="gene designation" value="YDR115W"/>
</dbReference>
<dbReference type="VEuPathDB" id="FungiDB:YDR115W"/>
<dbReference type="eggNOG" id="KOG4612">
    <property type="taxonomic scope" value="Eukaryota"/>
</dbReference>
<dbReference type="HOGENOM" id="CLU_129938_0_1_1"/>
<dbReference type="InParanoid" id="Q04598"/>
<dbReference type="OMA" id="GRWYLAH"/>
<dbReference type="OrthoDB" id="431691at2759"/>
<dbReference type="BioCyc" id="YEAST:G3O-29715-MONOMER"/>
<dbReference type="BioGRID-ORCS" id="851692">
    <property type="hits" value="7 hits in 10 CRISPR screens"/>
</dbReference>
<dbReference type="PRO" id="PR:Q04598"/>
<dbReference type="Proteomes" id="UP000002311">
    <property type="component" value="Chromosome IV"/>
</dbReference>
<dbReference type="RNAct" id="Q04598">
    <property type="molecule type" value="protein"/>
</dbReference>
<dbReference type="GO" id="GO:0005737">
    <property type="term" value="C:cytoplasm"/>
    <property type="evidence" value="ECO:0007005"/>
    <property type="project" value="SGD"/>
</dbReference>
<dbReference type="GO" id="GO:0005743">
    <property type="term" value="C:mitochondrial inner membrane"/>
    <property type="evidence" value="ECO:0000303"/>
    <property type="project" value="ComplexPortal"/>
</dbReference>
<dbReference type="GO" id="GO:0005762">
    <property type="term" value="C:mitochondrial large ribosomal subunit"/>
    <property type="evidence" value="ECO:0000247"/>
    <property type="project" value="SGD"/>
</dbReference>
<dbReference type="GO" id="GO:0005739">
    <property type="term" value="C:mitochondrion"/>
    <property type="evidence" value="ECO:0007005"/>
    <property type="project" value="SGD"/>
</dbReference>
<dbReference type="GO" id="GO:0005634">
    <property type="term" value="C:nucleus"/>
    <property type="evidence" value="ECO:0007005"/>
    <property type="project" value="SGD"/>
</dbReference>
<dbReference type="GO" id="GO:0003735">
    <property type="term" value="F:structural constituent of ribosome"/>
    <property type="evidence" value="ECO:0000247"/>
    <property type="project" value="SGD"/>
</dbReference>
<dbReference type="GO" id="GO:0032543">
    <property type="term" value="P:mitochondrial translation"/>
    <property type="evidence" value="ECO:0000247"/>
    <property type="project" value="SGD"/>
</dbReference>
<dbReference type="FunFam" id="1.10.287.3980:FF:000001">
    <property type="entry name" value="Mitochondrial ribosomal protein L34"/>
    <property type="match status" value="1"/>
</dbReference>
<dbReference type="Gene3D" id="1.10.287.3980">
    <property type="match status" value="1"/>
</dbReference>
<dbReference type="HAMAP" id="MF_00391">
    <property type="entry name" value="Ribosomal_bL34"/>
    <property type="match status" value="1"/>
</dbReference>
<dbReference type="InterPro" id="IPR000271">
    <property type="entry name" value="Ribosomal_bL34"/>
</dbReference>
<dbReference type="NCBIfam" id="TIGR01030">
    <property type="entry name" value="rpmH_bact"/>
    <property type="match status" value="1"/>
</dbReference>
<dbReference type="PANTHER" id="PTHR14503:SF4">
    <property type="entry name" value="LARGE RIBOSOMAL SUBUNIT PROTEIN BL34M"/>
    <property type="match status" value="1"/>
</dbReference>
<dbReference type="PANTHER" id="PTHR14503">
    <property type="entry name" value="MITOCHONDRIAL RIBOSOMAL PROTEIN 34 FAMILY MEMBER"/>
    <property type="match status" value="1"/>
</dbReference>
<dbReference type="Pfam" id="PF00468">
    <property type="entry name" value="Ribosomal_L34"/>
    <property type="match status" value="1"/>
</dbReference>
<protein>
    <recommendedName>
        <fullName evidence="6">Large ribosomal subunit protein bL34m</fullName>
    </recommendedName>
    <alternativeName>
        <fullName>54S ribosomal protein L34, mitochondrial</fullName>
        <shortName>L34mt</shortName>
    </alternativeName>
</protein>